<organism>
    <name type="scientific">Danio rerio</name>
    <name type="common">Zebrafish</name>
    <name type="synonym">Brachydanio rerio</name>
    <dbReference type="NCBI Taxonomy" id="7955"/>
    <lineage>
        <taxon>Eukaryota</taxon>
        <taxon>Metazoa</taxon>
        <taxon>Chordata</taxon>
        <taxon>Craniata</taxon>
        <taxon>Vertebrata</taxon>
        <taxon>Euteleostomi</taxon>
        <taxon>Actinopterygii</taxon>
        <taxon>Neopterygii</taxon>
        <taxon>Teleostei</taxon>
        <taxon>Ostariophysi</taxon>
        <taxon>Cypriniformes</taxon>
        <taxon>Danionidae</taxon>
        <taxon>Danioninae</taxon>
        <taxon>Danio</taxon>
    </lineage>
</organism>
<proteinExistence type="evidence at transcript level"/>
<gene>
    <name type="primary">tdrd5</name>
    <name type="ORF">si:dkey-171o17.7</name>
</gene>
<evidence type="ECO:0000250" key="1"/>
<evidence type="ECO:0000255" key="2">
    <source>
        <dbReference type="PROSITE-ProRule" id="PRU00211"/>
    </source>
</evidence>
<evidence type="ECO:0000255" key="3">
    <source>
        <dbReference type="PROSITE-ProRule" id="PRU00975"/>
    </source>
</evidence>
<evidence type="ECO:0000256" key="4">
    <source>
        <dbReference type="SAM" id="MobiDB-lite"/>
    </source>
</evidence>
<evidence type="ECO:0000303" key="5">
    <source ref="2"/>
</evidence>
<evidence type="ECO:0000305" key="6"/>
<keyword id="KW-0025">Alternative splicing</keyword>
<keyword id="KW-0963">Cytoplasm</keyword>
<keyword id="KW-0217">Developmental protein</keyword>
<keyword id="KW-0221">Differentiation</keyword>
<keyword id="KW-1185">Reference proteome</keyword>
<keyword id="KW-0677">Repeat</keyword>
<keyword id="KW-0744">Spermatogenesis</keyword>
<feature type="chain" id="PRO_0000281123" description="Tudor domain-containing protein 5">
    <location>
        <begin position="1"/>
        <end position="905"/>
    </location>
</feature>
<feature type="domain" description="HTH OST-type 1" evidence="3">
    <location>
        <begin position="6"/>
        <end position="79"/>
    </location>
</feature>
<feature type="domain" description="HTH OST-type 2" evidence="3">
    <location>
        <begin position="128"/>
        <end position="204"/>
    </location>
</feature>
<feature type="domain" description="HTH OST-type 3" evidence="3">
    <location>
        <begin position="288"/>
        <end position="364"/>
    </location>
</feature>
<feature type="domain" description="Tudor" evidence="2">
    <location>
        <begin position="523"/>
        <end position="581"/>
    </location>
</feature>
<feature type="region of interest" description="Disordered" evidence="4">
    <location>
        <begin position="219"/>
        <end position="264"/>
    </location>
</feature>
<feature type="region of interest" description="Disordered" evidence="4">
    <location>
        <begin position="368"/>
        <end position="393"/>
    </location>
</feature>
<feature type="region of interest" description="Disordered" evidence="4">
    <location>
        <begin position="694"/>
        <end position="728"/>
    </location>
</feature>
<feature type="compositionally biased region" description="Polar residues" evidence="4">
    <location>
        <begin position="379"/>
        <end position="393"/>
    </location>
</feature>
<feature type="compositionally biased region" description="Polar residues" evidence="4">
    <location>
        <begin position="700"/>
        <end position="723"/>
    </location>
</feature>
<feature type="splice variant" id="VSP_041055" description="In isoform 2." evidence="5">
    <location>
        <begin position="844"/>
        <end position="846"/>
    </location>
</feature>
<feature type="sequence conflict" description="In Ref. 2; AAI34986." evidence="6" ref="2">
    <original>H</original>
    <variation>Y</variation>
    <location>
        <position position="653"/>
    </location>
</feature>
<feature type="sequence conflict" description="In Ref. 2; AAI34986." evidence="6" ref="2">
    <original>I</original>
    <variation>M</variation>
    <location>
        <position position="698"/>
    </location>
</feature>
<feature type="sequence conflict" description="In Ref. 2; AAI34986." evidence="6" ref="2">
    <original>P</original>
    <variation>H</variation>
    <location>
        <position position="802"/>
    </location>
</feature>
<feature type="sequence conflict" description="In Ref. 2; AAI34986." evidence="6" ref="2">
    <original>V</original>
    <variation>I</variation>
    <location>
        <position position="829"/>
    </location>
</feature>
<comment type="function">
    <text evidence="1">Required during spermiogenesis to participate in the repression transposable elements and prevent their mobilization, which is essential for the germline integrity. Probably acts via the piRNA metabolic process, which mediates the repression of transposable elements during meiosis by forming complexes composed of piRNAs and Piwi proteins and govern the methylation and subsequent repression of transposons (By similarity).</text>
</comment>
<comment type="subcellular location">
    <subcellularLocation>
        <location evidence="1">Cytoplasm</location>
    </subcellularLocation>
    <text evidence="1">Localizes to chromatoid body (CB) and pi-body (also called intermitochondrial cementin), 2 cytoplasmic ribonucleoprotein granules involved in RNA processing for spermatogenesis.</text>
</comment>
<comment type="alternative products">
    <event type="alternative splicing"/>
    <isoform>
        <id>Q1L981-1</id>
        <name>1</name>
        <sequence type="displayed"/>
    </isoform>
    <isoform>
        <id>Q1L981-2</id>
        <name>2</name>
        <sequence type="described" ref="VSP_041055"/>
    </isoform>
</comment>
<comment type="similarity">
    <text evidence="6">Belongs to the TDRD5 family.</text>
</comment>
<protein>
    <recommendedName>
        <fullName>Tudor domain-containing protein 5</fullName>
    </recommendedName>
</protein>
<accession>Q1L981</accession>
<accession>A4QN69</accession>
<sequence>MTQDQLLAGLKKDVRSLLVSSKHGLTPEHLRRDYQSMLGFPMPLRLLGFRNVLDMVKEMPEVVRLEYQLDGNIILKAIGDDTTKGIEELVSKQRDHKPKPNNRKGKPGYFNISYPRLQPVILPRRGQAKPALPAHLRSQLKQLLSHGPVRLSELESRYVAQFGKPLNVTQYGFFSISEMLSAAMDFIIMQQSRTGSQLLLRSAVTPQNQPENLMRRFSMQSTSPKQRLAGFSPKASSLPERRPEVSLDPSSVSKPEPVKEEQSFEETVFKLEEELRQQILEKGTAGTVSQELKEKLRKVVAENGNGISIHNLPTEYQRMHGEELPVSQCGFLSVTEMVGALSDTLAIQRGTDESESHWMVVEFKPIDTQPCEPELSPGDGTTSSPTGELQNPSSRAFYFSCPESAWEHEETEPLTDSQESDAELRVANKTIHQMVNLFPELMVSRVSAVPLDAVRCQKLKPPVHRKERELLPVLVEQTESPSYFYIRFSQNKEARALENMMIEMRSCYSYPDVAERYRLPDAYVRPGQVCCVAPRDMWFYRVVIHEVFSETEVKVYYVDYGDITKVERHSLRFLKACYADLPAQAVPAMLAGVRPITNIWPASAVSCFQRLCCERTLVAGVHSYQEDFLLLFLCDTNTEEDVYVHLALIQEGHAQPCSAAYGLVSEKFNPVTSYFGYDQLEDVKESLSPFSCSPDAEIDSQGNDSPSSCRTASNSESGETNLASIDVDPNLDLPPLEVINVPDVNTAAKSENVNPFEALVRKDPLFNSEWDQGWTAEDKTDETKFELDVSTEQSKPETVYTPSPVQAAVGKQQLCASPVEPKVNATTCVNPHNPVPIQINCSYPVLPGVPVYPVKPPISQFMMQLLGNPVYQGPGPNTAFQHLTSPLALRPAARMSAGGQILHWS</sequence>
<dbReference type="EMBL" id="BC134985">
    <property type="protein sequence ID" value="AAI34986.1"/>
    <property type="molecule type" value="mRNA"/>
</dbReference>
<dbReference type="EMBL" id="CR381682">
    <property type="protein sequence ID" value="CAK05304.1"/>
    <property type="molecule type" value="Genomic_DNA"/>
</dbReference>
<dbReference type="RefSeq" id="NP_001038315.1">
    <molecule id="Q1L981-1"/>
    <property type="nucleotide sequence ID" value="NM_001044850.1"/>
</dbReference>
<dbReference type="RefSeq" id="XP_068072409.1">
    <molecule id="Q1L981-2"/>
    <property type="nucleotide sequence ID" value="XM_068216308.1"/>
</dbReference>
<dbReference type="SMR" id="Q1L981"/>
<dbReference type="FunCoup" id="Q1L981">
    <property type="interactions" value="1162"/>
</dbReference>
<dbReference type="IntAct" id="Q1L981">
    <property type="interactions" value="2"/>
</dbReference>
<dbReference type="MINT" id="Q1L981"/>
<dbReference type="STRING" id="7955.ENSDARP00000122775"/>
<dbReference type="PaxDb" id="7955-ENSDARP00000122775"/>
<dbReference type="Ensembl" id="ENSDART00000134798">
    <molecule id="Q1L981-1"/>
    <property type="protein sequence ID" value="ENSDARP00000122775"/>
    <property type="gene ID" value="ENSDARG00000071450"/>
</dbReference>
<dbReference type="GeneID" id="557999"/>
<dbReference type="KEGG" id="dre:557999"/>
<dbReference type="AGR" id="ZFIN:ZDB-GENE-050208-502"/>
<dbReference type="CTD" id="163589"/>
<dbReference type="ZFIN" id="ZDB-GENE-050208-502">
    <property type="gene designation" value="tdrd5"/>
</dbReference>
<dbReference type="eggNOG" id="KOG2039">
    <property type="taxonomic scope" value="Eukaryota"/>
</dbReference>
<dbReference type="HOGENOM" id="CLU_013593_1_0_1"/>
<dbReference type="InParanoid" id="Q1L981"/>
<dbReference type="OrthoDB" id="10052065at2759"/>
<dbReference type="PhylomeDB" id="Q1L981"/>
<dbReference type="TreeFam" id="TF342664"/>
<dbReference type="PRO" id="PR:Q1L981"/>
<dbReference type="Proteomes" id="UP000000437">
    <property type="component" value="Chromosome 22"/>
</dbReference>
<dbReference type="Bgee" id="ENSDARG00000071450">
    <property type="expression patterns" value="Expressed in testis and 17 other cell types or tissues"/>
</dbReference>
<dbReference type="ExpressionAtlas" id="Q1L981">
    <property type="expression patterns" value="baseline"/>
</dbReference>
<dbReference type="GO" id="GO:0033391">
    <property type="term" value="C:chromatoid body"/>
    <property type="evidence" value="ECO:0000250"/>
    <property type="project" value="UniProtKB"/>
</dbReference>
<dbReference type="GO" id="GO:0071546">
    <property type="term" value="C:pi-body"/>
    <property type="evidence" value="ECO:0000250"/>
    <property type="project" value="UniProtKB"/>
</dbReference>
<dbReference type="GO" id="GO:0030719">
    <property type="term" value="P:P granule organization"/>
    <property type="evidence" value="ECO:0000250"/>
    <property type="project" value="UniProtKB"/>
</dbReference>
<dbReference type="GO" id="GO:0007286">
    <property type="term" value="P:spermatid development"/>
    <property type="evidence" value="ECO:0000250"/>
    <property type="project" value="UniProtKB"/>
</dbReference>
<dbReference type="GO" id="GO:0141196">
    <property type="term" value="P:transposable element silencing by piRNA-mediated DNA methylation"/>
    <property type="evidence" value="ECO:0000250"/>
    <property type="project" value="UniProtKB"/>
</dbReference>
<dbReference type="CDD" id="cd09985">
    <property type="entry name" value="LOTUS_1_TDRD5"/>
    <property type="match status" value="1"/>
</dbReference>
<dbReference type="CDD" id="cd09975">
    <property type="entry name" value="LOTUS_2_TDRD5"/>
    <property type="match status" value="1"/>
</dbReference>
<dbReference type="CDD" id="cd09976">
    <property type="entry name" value="LOTUS_3_TDRD5"/>
    <property type="match status" value="1"/>
</dbReference>
<dbReference type="CDD" id="cd20419">
    <property type="entry name" value="Tudor_TDRD5"/>
    <property type="match status" value="1"/>
</dbReference>
<dbReference type="Gene3D" id="2.30.30.140">
    <property type="match status" value="1"/>
</dbReference>
<dbReference type="Gene3D" id="2.40.50.90">
    <property type="match status" value="1"/>
</dbReference>
<dbReference type="Gene3D" id="3.30.420.610">
    <property type="entry name" value="LOTUS domain-like"/>
    <property type="match status" value="3"/>
</dbReference>
<dbReference type="InterPro" id="IPR041966">
    <property type="entry name" value="LOTUS-like"/>
</dbReference>
<dbReference type="InterPro" id="IPR025605">
    <property type="entry name" value="OST-HTH/LOTUS_dom"/>
</dbReference>
<dbReference type="InterPro" id="IPR035437">
    <property type="entry name" value="SNase_OB-fold_sf"/>
</dbReference>
<dbReference type="InterPro" id="IPR037982">
    <property type="entry name" value="TDRD5_LOTUS_2"/>
</dbReference>
<dbReference type="InterPro" id="IPR002999">
    <property type="entry name" value="Tudor"/>
</dbReference>
<dbReference type="InterPro" id="IPR050621">
    <property type="entry name" value="Tudor_domain_containing"/>
</dbReference>
<dbReference type="PANTHER" id="PTHR22948">
    <property type="entry name" value="TUDOR DOMAIN CONTAINING PROTEIN"/>
    <property type="match status" value="1"/>
</dbReference>
<dbReference type="PANTHER" id="PTHR22948:SF19">
    <property type="entry name" value="TUDOR DOMAIN-CONTAINING PROTEIN 5"/>
    <property type="match status" value="1"/>
</dbReference>
<dbReference type="Pfam" id="PF12872">
    <property type="entry name" value="OST-HTH"/>
    <property type="match status" value="3"/>
</dbReference>
<dbReference type="Pfam" id="PF00567">
    <property type="entry name" value="TUDOR"/>
    <property type="match status" value="1"/>
</dbReference>
<dbReference type="SUPFAM" id="SSF63748">
    <property type="entry name" value="Tudor/PWWP/MBT"/>
    <property type="match status" value="1"/>
</dbReference>
<dbReference type="PROSITE" id="PS51644">
    <property type="entry name" value="HTH_OST"/>
    <property type="match status" value="3"/>
</dbReference>
<dbReference type="PROSITE" id="PS50304">
    <property type="entry name" value="TUDOR"/>
    <property type="match status" value="1"/>
</dbReference>
<name>TDRD5_DANRE</name>
<reference key="1">
    <citation type="journal article" date="2013" name="Nature">
        <title>The zebrafish reference genome sequence and its relationship to the human genome.</title>
        <authorList>
            <person name="Howe K."/>
            <person name="Clark M.D."/>
            <person name="Torroja C.F."/>
            <person name="Torrance J."/>
            <person name="Berthelot C."/>
            <person name="Muffato M."/>
            <person name="Collins J.E."/>
            <person name="Humphray S."/>
            <person name="McLaren K."/>
            <person name="Matthews L."/>
            <person name="McLaren S."/>
            <person name="Sealy I."/>
            <person name="Caccamo M."/>
            <person name="Churcher C."/>
            <person name="Scott C."/>
            <person name="Barrett J.C."/>
            <person name="Koch R."/>
            <person name="Rauch G.J."/>
            <person name="White S."/>
            <person name="Chow W."/>
            <person name="Kilian B."/>
            <person name="Quintais L.T."/>
            <person name="Guerra-Assuncao J.A."/>
            <person name="Zhou Y."/>
            <person name="Gu Y."/>
            <person name="Yen J."/>
            <person name="Vogel J.H."/>
            <person name="Eyre T."/>
            <person name="Redmond S."/>
            <person name="Banerjee R."/>
            <person name="Chi J."/>
            <person name="Fu B."/>
            <person name="Langley E."/>
            <person name="Maguire S.F."/>
            <person name="Laird G.K."/>
            <person name="Lloyd D."/>
            <person name="Kenyon E."/>
            <person name="Donaldson S."/>
            <person name="Sehra H."/>
            <person name="Almeida-King J."/>
            <person name="Loveland J."/>
            <person name="Trevanion S."/>
            <person name="Jones M."/>
            <person name="Quail M."/>
            <person name="Willey D."/>
            <person name="Hunt A."/>
            <person name="Burton J."/>
            <person name="Sims S."/>
            <person name="McLay K."/>
            <person name="Plumb B."/>
            <person name="Davis J."/>
            <person name="Clee C."/>
            <person name="Oliver K."/>
            <person name="Clark R."/>
            <person name="Riddle C."/>
            <person name="Elliot D."/>
            <person name="Threadgold G."/>
            <person name="Harden G."/>
            <person name="Ware D."/>
            <person name="Begum S."/>
            <person name="Mortimore B."/>
            <person name="Kerry G."/>
            <person name="Heath P."/>
            <person name="Phillimore B."/>
            <person name="Tracey A."/>
            <person name="Corby N."/>
            <person name="Dunn M."/>
            <person name="Johnson C."/>
            <person name="Wood J."/>
            <person name="Clark S."/>
            <person name="Pelan S."/>
            <person name="Griffiths G."/>
            <person name="Smith M."/>
            <person name="Glithero R."/>
            <person name="Howden P."/>
            <person name="Barker N."/>
            <person name="Lloyd C."/>
            <person name="Stevens C."/>
            <person name="Harley J."/>
            <person name="Holt K."/>
            <person name="Panagiotidis G."/>
            <person name="Lovell J."/>
            <person name="Beasley H."/>
            <person name="Henderson C."/>
            <person name="Gordon D."/>
            <person name="Auger K."/>
            <person name="Wright D."/>
            <person name="Collins J."/>
            <person name="Raisen C."/>
            <person name="Dyer L."/>
            <person name="Leung K."/>
            <person name="Robertson L."/>
            <person name="Ambridge K."/>
            <person name="Leongamornlert D."/>
            <person name="McGuire S."/>
            <person name="Gilderthorp R."/>
            <person name="Griffiths C."/>
            <person name="Manthravadi D."/>
            <person name="Nichol S."/>
            <person name="Barker G."/>
            <person name="Whitehead S."/>
            <person name="Kay M."/>
            <person name="Brown J."/>
            <person name="Murnane C."/>
            <person name="Gray E."/>
            <person name="Humphries M."/>
            <person name="Sycamore N."/>
            <person name="Barker D."/>
            <person name="Saunders D."/>
            <person name="Wallis J."/>
            <person name="Babbage A."/>
            <person name="Hammond S."/>
            <person name="Mashreghi-Mohammadi M."/>
            <person name="Barr L."/>
            <person name="Martin S."/>
            <person name="Wray P."/>
            <person name="Ellington A."/>
            <person name="Matthews N."/>
            <person name="Ellwood M."/>
            <person name="Woodmansey R."/>
            <person name="Clark G."/>
            <person name="Cooper J."/>
            <person name="Tromans A."/>
            <person name="Grafham D."/>
            <person name="Skuce C."/>
            <person name="Pandian R."/>
            <person name="Andrews R."/>
            <person name="Harrison E."/>
            <person name="Kimberley A."/>
            <person name="Garnett J."/>
            <person name="Fosker N."/>
            <person name="Hall R."/>
            <person name="Garner P."/>
            <person name="Kelly D."/>
            <person name="Bird C."/>
            <person name="Palmer S."/>
            <person name="Gehring I."/>
            <person name="Berger A."/>
            <person name="Dooley C.M."/>
            <person name="Ersan-Urun Z."/>
            <person name="Eser C."/>
            <person name="Geiger H."/>
            <person name="Geisler M."/>
            <person name="Karotki L."/>
            <person name="Kirn A."/>
            <person name="Konantz J."/>
            <person name="Konantz M."/>
            <person name="Oberlander M."/>
            <person name="Rudolph-Geiger S."/>
            <person name="Teucke M."/>
            <person name="Lanz C."/>
            <person name="Raddatz G."/>
            <person name="Osoegawa K."/>
            <person name="Zhu B."/>
            <person name="Rapp A."/>
            <person name="Widaa S."/>
            <person name="Langford C."/>
            <person name="Yang F."/>
            <person name="Schuster S.C."/>
            <person name="Carter N.P."/>
            <person name="Harrow J."/>
            <person name="Ning Z."/>
            <person name="Herrero J."/>
            <person name="Searle S.M."/>
            <person name="Enright A."/>
            <person name="Geisler R."/>
            <person name="Plasterk R.H."/>
            <person name="Lee C."/>
            <person name="Westerfield M."/>
            <person name="de Jong P.J."/>
            <person name="Zon L.I."/>
            <person name="Postlethwait J.H."/>
            <person name="Nusslein-Volhard C."/>
            <person name="Hubbard T.J."/>
            <person name="Roest Crollius H."/>
            <person name="Rogers J."/>
            <person name="Stemple D.L."/>
        </authorList>
    </citation>
    <scope>NUCLEOTIDE SEQUENCE [LARGE SCALE GENOMIC DNA]</scope>
    <source>
        <strain>Tuebingen</strain>
    </source>
</reference>
<reference key="2">
    <citation type="submission" date="2007-03" db="EMBL/GenBank/DDBJ databases">
        <authorList>
            <consortium name="NIH - Zebrafish Gene Collection (ZGC) project"/>
        </authorList>
    </citation>
    <scope>NUCLEOTIDE SEQUENCE [LARGE SCALE MRNA] (ISOFORM 2)</scope>
    <source>
        <tissue>Embryo</tissue>
    </source>
</reference>